<feature type="chain" id="PRO_1000138030" description="N-succinylarginine dihydrolase">
    <location>
        <begin position="1"/>
        <end position="445"/>
    </location>
</feature>
<feature type="active site" evidence="1">
    <location>
        <position position="174"/>
    </location>
</feature>
<feature type="active site" evidence="1">
    <location>
        <position position="250"/>
    </location>
</feature>
<feature type="active site" description="Nucleophile" evidence="1">
    <location>
        <position position="369"/>
    </location>
</feature>
<feature type="binding site" evidence="1">
    <location>
        <begin position="19"/>
        <end position="28"/>
    </location>
    <ligand>
        <name>substrate</name>
    </ligand>
</feature>
<feature type="binding site" evidence="1">
    <location>
        <position position="110"/>
    </location>
    <ligand>
        <name>substrate</name>
    </ligand>
</feature>
<feature type="binding site" evidence="1">
    <location>
        <begin position="137"/>
        <end position="138"/>
    </location>
    <ligand>
        <name>substrate</name>
    </ligand>
</feature>
<feature type="binding site" evidence="1">
    <location>
        <position position="214"/>
    </location>
    <ligand>
        <name>substrate</name>
    </ligand>
</feature>
<feature type="binding site" evidence="1">
    <location>
        <position position="252"/>
    </location>
    <ligand>
        <name>substrate</name>
    </ligand>
</feature>
<feature type="binding site" evidence="1">
    <location>
        <position position="363"/>
    </location>
    <ligand>
        <name>substrate</name>
    </ligand>
</feature>
<accession>B1KNK9</accession>
<organism>
    <name type="scientific">Shewanella woodyi (strain ATCC 51908 / MS32)</name>
    <dbReference type="NCBI Taxonomy" id="392500"/>
    <lineage>
        <taxon>Bacteria</taxon>
        <taxon>Pseudomonadati</taxon>
        <taxon>Pseudomonadota</taxon>
        <taxon>Gammaproteobacteria</taxon>
        <taxon>Alteromonadales</taxon>
        <taxon>Shewanellaceae</taxon>
        <taxon>Shewanella</taxon>
    </lineage>
</organism>
<name>ASTB_SHEWM</name>
<reference key="1">
    <citation type="submission" date="2008-02" db="EMBL/GenBank/DDBJ databases">
        <title>Complete sequence of Shewanella woodyi ATCC 51908.</title>
        <authorList>
            <consortium name="US DOE Joint Genome Institute"/>
            <person name="Copeland A."/>
            <person name="Lucas S."/>
            <person name="Lapidus A."/>
            <person name="Glavina del Rio T."/>
            <person name="Dalin E."/>
            <person name="Tice H."/>
            <person name="Bruce D."/>
            <person name="Goodwin L."/>
            <person name="Pitluck S."/>
            <person name="Sims D."/>
            <person name="Brettin T."/>
            <person name="Detter J.C."/>
            <person name="Han C."/>
            <person name="Kuske C.R."/>
            <person name="Schmutz J."/>
            <person name="Larimer F."/>
            <person name="Land M."/>
            <person name="Hauser L."/>
            <person name="Kyrpides N."/>
            <person name="Lykidis A."/>
            <person name="Zhao J.-S."/>
            <person name="Richardson P."/>
        </authorList>
    </citation>
    <scope>NUCLEOTIDE SEQUENCE [LARGE SCALE GENOMIC DNA]</scope>
    <source>
        <strain>ATCC 51908 / MS32</strain>
    </source>
</reference>
<protein>
    <recommendedName>
        <fullName evidence="1">N-succinylarginine dihydrolase</fullName>
        <ecNumber evidence="1">3.5.3.23</ecNumber>
    </recommendedName>
</protein>
<evidence type="ECO:0000255" key="1">
    <source>
        <dbReference type="HAMAP-Rule" id="MF_01172"/>
    </source>
</evidence>
<dbReference type="EC" id="3.5.3.23" evidence="1"/>
<dbReference type="EMBL" id="CP000961">
    <property type="protein sequence ID" value="ACA86086.1"/>
    <property type="molecule type" value="Genomic_DNA"/>
</dbReference>
<dbReference type="RefSeq" id="WP_012324432.1">
    <property type="nucleotide sequence ID" value="NC_010506.1"/>
</dbReference>
<dbReference type="SMR" id="B1KNK9"/>
<dbReference type="STRING" id="392500.Swoo_1802"/>
<dbReference type="KEGG" id="swd:Swoo_1802"/>
<dbReference type="eggNOG" id="COG3724">
    <property type="taxonomic scope" value="Bacteria"/>
</dbReference>
<dbReference type="HOGENOM" id="CLU_053835_0_0_6"/>
<dbReference type="UniPathway" id="UPA00185">
    <property type="reaction ID" value="UER00280"/>
</dbReference>
<dbReference type="Proteomes" id="UP000002168">
    <property type="component" value="Chromosome"/>
</dbReference>
<dbReference type="GO" id="GO:0009015">
    <property type="term" value="F:N-succinylarginine dihydrolase activity"/>
    <property type="evidence" value="ECO:0007669"/>
    <property type="project" value="UniProtKB-UniRule"/>
</dbReference>
<dbReference type="GO" id="GO:0019544">
    <property type="term" value="P:arginine catabolic process to glutamate"/>
    <property type="evidence" value="ECO:0007669"/>
    <property type="project" value="UniProtKB-UniRule"/>
</dbReference>
<dbReference type="GO" id="GO:0019545">
    <property type="term" value="P:arginine catabolic process to succinate"/>
    <property type="evidence" value="ECO:0007669"/>
    <property type="project" value="UniProtKB-UniRule"/>
</dbReference>
<dbReference type="Gene3D" id="3.75.10.20">
    <property type="entry name" value="Succinylarginine dihydrolase"/>
    <property type="match status" value="1"/>
</dbReference>
<dbReference type="HAMAP" id="MF_01172">
    <property type="entry name" value="AstB"/>
    <property type="match status" value="1"/>
</dbReference>
<dbReference type="InterPro" id="IPR037031">
    <property type="entry name" value="AstB_sf"/>
</dbReference>
<dbReference type="InterPro" id="IPR007079">
    <property type="entry name" value="SuccinylArg_d-Hdrlase_AstB"/>
</dbReference>
<dbReference type="NCBIfam" id="TIGR03241">
    <property type="entry name" value="arg_catab_astB"/>
    <property type="match status" value="1"/>
</dbReference>
<dbReference type="NCBIfam" id="NF009789">
    <property type="entry name" value="PRK13281.1"/>
    <property type="match status" value="1"/>
</dbReference>
<dbReference type="PANTHER" id="PTHR30420">
    <property type="entry name" value="N-SUCCINYLARGININE DIHYDROLASE"/>
    <property type="match status" value="1"/>
</dbReference>
<dbReference type="PANTHER" id="PTHR30420:SF2">
    <property type="entry name" value="N-SUCCINYLARGININE DIHYDROLASE"/>
    <property type="match status" value="1"/>
</dbReference>
<dbReference type="Pfam" id="PF04996">
    <property type="entry name" value="AstB"/>
    <property type="match status" value="1"/>
</dbReference>
<dbReference type="SUPFAM" id="SSF55909">
    <property type="entry name" value="Pentein"/>
    <property type="match status" value="1"/>
</dbReference>
<gene>
    <name evidence="1" type="primary">astB</name>
    <name type="ordered locus">Swoo_1802</name>
</gene>
<sequence>MKHFEANFDGLVGPTHNYAGLSFGNVASFSNASAVSDPKSAAKQGLKKAKALADMGMVQGMLAPQERPDLHTLRRIGFSGTDAEILNKAAKEAPALLRACCSASSMWTANAATVSPSADTQDGKLHFTPANLVDKLHRSIEPVTTGNILAATFNNSRHFSHHQHLPEHSSFGDEGAANHTRLCENYGNAGVELFVYGQEATNPNAPKPQKYPARQTLEASQAIARLHGLSEENTVYLSQNPDVIDQGVFHNDVIAVGNQNVLFYHQQAFLDTQNKFDEIQQKFGDSKVHFIEVPTAKVSIEDAVKSYLFNTQIITLPSGEMAIIAPTNCQENPAVFAYLNELVTLGTPIKQVNYFDVKQSMQNGGGPACLRLRVAMNDMELAAVNQNTLMNDALFTRLNAWVDKHYRDRLSVDDLADPQLIIESRTALDELTQIMKLGSVYQFQK</sequence>
<keyword id="KW-0056">Arginine metabolism</keyword>
<keyword id="KW-0378">Hydrolase</keyword>
<keyword id="KW-1185">Reference proteome</keyword>
<proteinExistence type="inferred from homology"/>
<comment type="function">
    <text evidence="1">Catalyzes the hydrolysis of N(2)-succinylarginine into N(2)-succinylornithine, ammonia and CO(2).</text>
</comment>
<comment type="catalytic activity">
    <reaction evidence="1">
        <text>N(2)-succinyl-L-arginine + 2 H2O + 2 H(+) = N(2)-succinyl-L-ornithine + 2 NH4(+) + CO2</text>
        <dbReference type="Rhea" id="RHEA:19533"/>
        <dbReference type="ChEBI" id="CHEBI:15377"/>
        <dbReference type="ChEBI" id="CHEBI:15378"/>
        <dbReference type="ChEBI" id="CHEBI:16526"/>
        <dbReference type="ChEBI" id="CHEBI:28938"/>
        <dbReference type="ChEBI" id="CHEBI:58241"/>
        <dbReference type="ChEBI" id="CHEBI:58514"/>
        <dbReference type="EC" id="3.5.3.23"/>
    </reaction>
</comment>
<comment type="pathway">
    <text evidence="1">Amino-acid degradation; L-arginine degradation via AST pathway; L-glutamate and succinate from L-arginine: step 2/5.</text>
</comment>
<comment type="subunit">
    <text evidence="1">Homodimer.</text>
</comment>
<comment type="similarity">
    <text evidence="1">Belongs to the succinylarginine dihydrolase family.</text>
</comment>